<evidence type="ECO:0000255" key="1">
    <source>
        <dbReference type="HAMAP-Rule" id="MF_00323"/>
    </source>
</evidence>
<sequence>MRQTKTGILLANLGTPDAPTPEAVKRYLKQFLSDRRVVDTPRLLWWPLLRGVILPLRSPRVAKLYQSIWMDGGSPLMVYSREQQQALAARLPDTPVALGMSYGSPSLESAVDELLASDVDHIVVLPLYPQYSCSTVGAVWDELGRILARKRRIPGISFIRDYADDGAYIDALAKSARESFARHGEPDVLLLSYHGIPQRYADEGDDYPQRCRDTTRELVSALGLPPEKVMMTFQSRFGREPWLTPYTDETLKMLGEKGTGHIQVMCPGFAADCLETLEEIAEQNREIFLEAGGKKYAYIPALNATPEHIDMMLKLTAPYR</sequence>
<proteinExistence type="inferred from homology"/>
<comment type="function">
    <text evidence="1">Catalyzes the ferrous insertion into protoporphyrin IX.</text>
</comment>
<comment type="catalytic activity">
    <reaction evidence="1">
        <text>heme b + 2 H(+) = protoporphyrin IX + Fe(2+)</text>
        <dbReference type="Rhea" id="RHEA:22584"/>
        <dbReference type="ChEBI" id="CHEBI:15378"/>
        <dbReference type="ChEBI" id="CHEBI:29033"/>
        <dbReference type="ChEBI" id="CHEBI:57306"/>
        <dbReference type="ChEBI" id="CHEBI:60344"/>
        <dbReference type="EC" id="4.98.1.1"/>
    </reaction>
</comment>
<comment type="pathway">
    <text evidence="1">Porphyrin-containing compound metabolism; protoheme biosynthesis; protoheme from protoporphyrin-IX: step 1/1.</text>
</comment>
<comment type="subunit">
    <text evidence="1">Monomer.</text>
</comment>
<comment type="subcellular location">
    <subcellularLocation>
        <location evidence="1">Cytoplasm</location>
    </subcellularLocation>
</comment>
<comment type="similarity">
    <text evidence="1">Belongs to the ferrochelatase family.</text>
</comment>
<dbReference type="EC" id="4.98.1.1" evidence="1"/>
<dbReference type="EMBL" id="CP000857">
    <property type="protein sequence ID" value="ACN44684.1"/>
    <property type="molecule type" value="Genomic_DNA"/>
</dbReference>
<dbReference type="RefSeq" id="WP_001250078.1">
    <property type="nucleotide sequence ID" value="NC_012125.1"/>
</dbReference>
<dbReference type="SMR" id="C0PVE1"/>
<dbReference type="KEGG" id="sei:SPC_0504"/>
<dbReference type="HOGENOM" id="CLU_018884_0_0_6"/>
<dbReference type="UniPathway" id="UPA00252">
    <property type="reaction ID" value="UER00325"/>
</dbReference>
<dbReference type="Proteomes" id="UP000001599">
    <property type="component" value="Chromosome"/>
</dbReference>
<dbReference type="GO" id="GO:0005737">
    <property type="term" value="C:cytoplasm"/>
    <property type="evidence" value="ECO:0007669"/>
    <property type="project" value="UniProtKB-SubCell"/>
</dbReference>
<dbReference type="GO" id="GO:0004325">
    <property type="term" value="F:ferrochelatase activity"/>
    <property type="evidence" value="ECO:0007669"/>
    <property type="project" value="UniProtKB-UniRule"/>
</dbReference>
<dbReference type="GO" id="GO:0046872">
    <property type="term" value="F:metal ion binding"/>
    <property type="evidence" value="ECO:0007669"/>
    <property type="project" value="UniProtKB-KW"/>
</dbReference>
<dbReference type="GO" id="GO:0006783">
    <property type="term" value="P:heme biosynthetic process"/>
    <property type="evidence" value="ECO:0007669"/>
    <property type="project" value="UniProtKB-UniRule"/>
</dbReference>
<dbReference type="CDD" id="cd00419">
    <property type="entry name" value="Ferrochelatase_C"/>
    <property type="match status" value="1"/>
</dbReference>
<dbReference type="CDD" id="cd03411">
    <property type="entry name" value="Ferrochelatase_N"/>
    <property type="match status" value="1"/>
</dbReference>
<dbReference type="FunFam" id="3.40.50.1400:FF:000004">
    <property type="entry name" value="Ferrochelatase"/>
    <property type="match status" value="1"/>
</dbReference>
<dbReference type="Gene3D" id="3.40.50.1400">
    <property type="match status" value="2"/>
</dbReference>
<dbReference type="HAMAP" id="MF_00323">
    <property type="entry name" value="Ferrochelatase"/>
    <property type="match status" value="1"/>
</dbReference>
<dbReference type="InterPro" id="IPR001015">
    <property type="entry name" value="Ferrochelatase"/>
</dbReference>
<dbReference type="InterPro" id="IPR019772">
    <property type="entry name" value="Ferrochelatase_AS"/>
</dbReference>
<dbReference type="InterPro" id="IPR033644">
    <property type="entry name" value="Ferrochelatase_C"/>
</dbReference>
<dbReference type="InterPro" id="IPR033659">
    <property type="entry name" value="Ferrochelatase_N"/>
</dbReference>
<dbReference type="NCBIfam" id="TIGR00109">
    <property type="entry name" value="hemH"/>
    <property type="match status" value="1"/>
</dbReference>
<dbReference type="PANTHER" id="PTHR11108">
    <property type="entry name" value="FERROCHELATASE"/>
    <property type="match status" value="1"/>
</dbReference>
<dbReference type="PANTHER" id="PTHR11108:SF1">
    <property type="entry name" value="FERROCHELATASE, MITOCHONDRIAL"/>
    <property type="match status" value="1"/>
</dbReference>
<dbReference type="Pfam" id="PF00762">
    <property type="entry name" value="Ferrochelatase"/>
    <property type="match status" value="1"/>
</dbReference>
<dbReference type="SUPFAM" id="SSF53800">
    <property type="entry name" value="Chelatase"/>
    <property type="match status" value="1"/>
</dbReference>
<dbReference type="PROSITE" id="PS00534">
    <property type="entry name" value="FERROCHELATASE"/>
    <property type="match status" value="1"/>
</dbReference>
<keyword id="KW-0963">Cytoplasm</keyword>
<keyword id="KW-0350">Heme biosynthesis</keyword>
<keyword id="KW-0408">Iron</keyword>
<keyword id="KW-0456">Lyase</keyword>
<keyword id="KW-0479">Metal-binding</keyword>
<keyword id="KW-0627">Porphyrin biosynthesis</keyword>
<accession>C0PVE1</accession>
<name>HEMH_SALPC</name>
<gene>
    <name evidence="1" type="primary">hemH</name>
    <name type="ordered locus">SPC_0504</name>
</gene>
<protein>
    <recommendedName>
        <fullName evidence="1">Ferrochelatase</fullName>
        <ecNumber evidence="1">4.98.1.1</ecNumber>
    </recommendedName>
    <alternativeName>
        <fullName evidence="1">Heme synthase</fullName>
    </alternativeName>
    <alternativeName>
        <fullName evidence="1">Protoheme ferro-lyase</fullName>
    </alternativeName>
</protein>
<reference key="1">
    <citation type="journal article" date="2009" name="PLoS ONE">
        <title>Salmonella paratyphi C: genetic divergence from Salmonella choleraesuis and pathogenic convergence with Salmonella typhi.</title>
        <authorList>
            <person name="Liu W.-Q."/>
            <person name="Feng Y."/>
            <person name="Wang Y."/>
            <person name="Zou Q.-H."/>
            <person name="Chen F."/>
            <person name="Guo J.-T."/>
            <person name="Peng Y.-H."/>
            <person name="Jin Y."/>
            <person name="Li Y.-G."/>
            <person name="Hu S.-N."/>
            <person name="Johnston R.N."/>
            <person name="Liu G.-R."/>
            <person name="Liu S.-L."/>
        </authorList>
    </citation>
    <scope>NUCLEOTIDE SEQUENCE [LARGE SCALE GENOMIC DNA]</scope>
    <source>
        <strain>RKS4594</strain>
    </source>
</reference>
<organism>
    <name type="scientific">Salmonella paratyphi C (strain RKS4594)</name>
    <dbReference type="NCBI Taxonomy" id="476213"/>
    <lineage>
        <taxon>Bacteria</taxon>
        <taxon>Pseudomonadati</taxon>
        <taxon>Pseudomonadota</taxon>
        <taxon>Gammaproteobacteria</taxon>
        <taxon>Enterobacterales</taxon>
        <taxon>Enterobacteriaceae</taxon>
        <taxon>Salmonella</taxon>
    </lineage>
</organism>
<feature type="chain" id="PRO_1000189990" description="Ferrochelatase">
    <location>
        <begin position="1"/>
        <end position="320"/>
    </location>
</feature>
<feature type="binding site" evidence="1">
    <location>
        <position position="194"/>
    </location>
    <ligand>
        <name>Fe cation</name>
        <dbReference type="ChEBI" id="CHEBI:24875"/>
    </ligand>
</feature>
<feature type="binding site" evidence="1">
    <location>
        <position position="275"/>
    </location>
    <ligand>
        <name>Fe cation</name>
        <dbReference type="ChEBI" id="CHEBI:24875"/>
    </ligand>
</feature>